<proteinExistence type="inferred from homology"/>
<feature type="chain" id="PRO_0000344929" description="Ribonuclease Y">
    <location>
        <begin position="1"/>
        <end position="514"/>
    </location>
</feature>
<feature type="transmembrane region" description="Helical" evidence="1">
    <location>
        <begin position="3"/>
        <end position="23"/>
    </location>
</feature>
<feature type="domain" description="KH" evidence="1">
    <location>
        <begin position="203"/>
        <end position="266"/>
    </location>
</feature>
<feature type="domain" description="HD" evidence="2">
    <location>
        <begin position="330"/>
        <end position="423"/>
    </location>
</feature>
<comment type="function">
    <text evidence="1">Endoribonuclease that initiates mRNA decay.</text>
</comment>
<comment type="subcellular location">
    <subcellularLocation>
        <location evidence="1">Cell membrane</location>
        <topology evidence="1">Single-pass membrane protein</topology>
    </subcellularLocation>
</comment>
<comment type="similarity">
    <text evidence="1">Belongs to the RNase Y family.</text>
</comment>
<protein>
    <recommendedName>
        <fullName evidence="1">Ribonuclease Y</fullName>
        <shortName evidence="1">RNase Y</shortName>
        <ecNumber evidence="1">3.1.-.-</ecNumber>
    </recommendedName>
</protein>
<sequence>MSVLWMVLGLAIGIAVGAAAGYIVCRSRTDRRLAETRADARSIIEDANRQAETLRREAELAAKEAAMRIKDEAEAEVRARRAEISRIEERLDNRDTALDRREVELDERRRRLSETEDELRRREESLAEREQEQLRALEEISGLSRAEAEERLFSRVEAELERRIGRMVRNRISEAEENADLEARRILATTMERLASDLTSESTVKAVELPSDDMKGRVIGREGRNIRAFEAATGVDVIIDDTPETVVLSCFDPVRREVARIAMERLVKDGRIHPGRIEQVVAKVRKEVEKEMKAAGRQALYDAKVSGSMHGDLLRLLGALKYRSSYGQNVLAHSVEVANIAGMMAQELGANVKIARRAALLHDVGKAIDHEAEGTHALIGGRFAKKCGESDEVVRAISAHHHEVEMQTVEDVIVATADAVSAARPGARRETTEVYLERLRNLEDIALSHRGVDKAYAIQAGREIRVMVQPSEVDDRIAAKLAYDISRKIEDELEYPGQIKVTVIRESRVSEVAR</sequence>
<keyword id="KW-1003">Cell membrane</keyword>
<keyword id="KW-0255">Endonuclease</keyword>
<keyword id="KW-0378">Hydrolase</keyword>
<keyword id="KW-0472">Membrane</keyword>
<keyword id="KW-0540">Nuclease</keyword>
<keyword id="KW-1185">Reference proteome</keyword>
<keyword id="KW-0694">RNA-binding</keyword>
<keyword id="KW-0812">Transmembrane</keyword>
<keyword id="KW-1133">Transmembrane helix</keyword>
<gene>
    <name evidence="1" type="primary">rny</name>
    <name type="ordered locus">Rxyl_1425</name>
</gene>
<reference key="1">
    <citation type="submission" date="2006-06" db="EMBL/GenBank/DDBJ databases">
        <title>Complete sequence of Rubrobacter xylanophilus DSM 9941.</title>
        <authorList>
            <consortium name="US DOE Joint Genome Institute"/>
            <person name="Copeland A."/>
            <person name="Lucas S."/>
            <person name="Lapidus A."/>
            <person name="Barry K."/>
            <person name="Detter J.C."/>
            <person name="Glavina del Rio T."/>
            <person name="Hammon N."/>
            <person name="Israni S."/>
            <person name="Dalin E."/>
            <person name="Tice H."/>
            <person name="Pitluck S."/>
            <person name="Munk A.C."/>
            <person name="Brettin T."/>
            <person name="Bruce D."/>
            <person name="Han C."/>
            <person name="Tapia R."/>
            <person name="Gilna P."/>
            <person name="Schmutz J."/>
            <person name="Larimer F."/>
            <person name="Land M."/>
            <person name="Hauser L."/>
            <person name="Kyrpides N."/>
            <person name="Lykidis A."/>
            <person name="da Costa M.S."/>
            <person name="Rainey F.A."/>
            <person name="Empadinhas N."/>
            <person name="Jolivet E."/>
            <person name="Battista J.R."/>
            <person name="Richardson P."/>
        </authorList>
    </citation>
    <scope>NUCLEOTIDE SEQUENCE [LARGE SCALE GENOMIC DNA]</scope>
    <source>
        <strain>DSM 9941 / JCM 11954 / NBRC 16129 / PRD-1</strain>
    </source>
</reference>
<evidence type="ECO:0000255" key="1">
    <source>
        <dbReference type="HAMAP-Rule" id="MF_00335"/>
    </source>
</evidence>
<evidence type="ECO:0000255" key="2">
    <source>
        <dbReference type="PROSITE-ProRule" id="PRU01175"/>
    </source>
</evidence>
<name>RNY_RUBXD</name>
<accession>Q1AW41</accession>
<dbReference type="EC" id="3.1.-.-" evidence="1"/>
<dbReference type="EMBL" id="CP000386">
    <property type="protein sequence ID" value="ABG04387.1"/>
    <property type="molecule type" value="Genomic_DNA"/>
</dbReference>
<dbReference type="RefSeq" id="WP_011564404.1">
    <property type="nucleotide sequence ID" value="NC_008148.1"/>
</dbReference>
<dbReference type="SMR" id="Q1AW41"/>
<dbReference type="STRING" id="266117.Rxyl_1425"/>
<dbReference type="KEGG" id="rxy:Rxyl_1425"/>
<dbReference type="eggNOG" id="COG1418">
    <property type="taxonomic scope" value="Bacteria"/>
</dbReference>
<dbReference type="HOGENOM" id="CLU_028328_1_0_11"/>
<dbReference type="OrthoDB" id="9803205at2"/>
<dbReference type="PhylomeDB" id="Q1AW41"/>
<dbReference type="Proteomes" id="UP000006637">
    <property type="component" value="Chromosome"/>
</dbReference>
<dbReference type="GO" id="GO:0005886">
    <property type="term" value="C:plasma membrane"/>
    <property type="evidence" value="ECO:0007669"/>
    <property type="project" value="UniProtKB-SubCell"/>
</dbReference>
<dbReference type="GO" id="GO:0003723">
    <property type="term" value="F:RNA binding"/>
    <property type="evidence" value="ECO:0007669"/>
    <property type="project" value="UniProtKB-UniRule"/>
</dbReference>
<dbReference type="GO" id="GO:0004521">
    <property type="term" value="F:RNA endonuclease activity"/>
    <property type="evidence" value="ECO:0007669"/>
    <property type="project" value="UniProtKB-UniRule"/>
</dbReference>
<dbReference type="GO" id="GO:0006402">
    <property type="term" value="P:mRNA catabolic process"/>
    <property type="evidence" value="ECO:0007669"/>
    <property type="project" value="UniProtKB-UniRule"/>
</dbReference>
<dbReference type="CDD" id="cd00077">
    <property type="entry name" value="HDc"/>
    <property type="match status" value="1"/>
</dbReference>
<dbReference type="CDD" id="cd22431">
    <property type="entry name" value="KH-I_RNaseY"/>
    <property type="match status" value="1"/>
</dbReference>
<dbReference type="Gene3D" id="1.10.3210.10">
    <property type="entry name" value="Hypothetical protein af1432"/>
    <property type="match status" value="1"/>
</dbReference>
<dbReference type="HAMAP" id="MF_00335">
    <property type="entry name" value="RNase_Y"/>
    <property type="match status" value="1"/>
</dbReference>
<dbReference type="InterPro" id="IPR003607">
    <property type="entry name" value="HD/PDEase_dom"/>
</dbReference>
<dbReference type="InterPro" id="IPR006674">
    <property type="entry name" value="HD_domain"/>
</dbReference>
<dbReference type="InterPro" id="IPR006675">
    <property type="entry name" value="HDIG_dom"/>
</dbReference>
<dbReference type="InterPro" id="IPR004087">
    <property type="entry name" value="KH_dom"/>
</dbReference>
<dbReference type="InterPro" id="IPR004088">
    <property type="entry name" value="KH_dom_type_1"/>
</dbReference>
<dbReference type="InterPro" id="IPR036612">
    <property type="entry name" value="KH_dom_type_1_sf"/>
</dbReference>
<dbReference type="InterPro" id="IPR017705">
    <property type="entry name" value="Ribonuclease_Y"/>
</dbReference>
<dbReference type="InterPro" id="IPR022711">
    <property type="entry name" value="RNase_Y_N"/>
</dbReference>
<dbReference type="NCBIfam" id="TIGR00277">
    <property type="entry name" value="HDIG"/>
    <property type="match status" value="1"/>
</dbReference>
<dbReference type="NCBIfam" id="TIGR03319">
    <property type="entry name" value="RNase_Y"/>
    <property type="match status" value="1"/>
</dbReference>
<dbReference type="PANTHER" id="PTHR12826">
    <property type="entry name" value="RIBONUCLEASE Y"/>
    <property type="match status" value="1"/>
</dbReference>
<dbReference type="PANTHER" id="PTHR12826:SF15">
    <property type="entry name" value="RIBONUCLEASE Y"/>
    <property type="match status" value="1"/>
</dbReference>
<dbReference type="Pfam" id="PF01966">
    <property type="entry name" value="HD"/>
    <property type="match status" value="1"/>
</dbReference>
<dbReference type="Pfam" id="PF00013">
    <property type="entry name" value="KH_1"/>
    <property type="match status" value="1"/>
</dbReference>
<dbReference type="Pfam" id="PF12072">
    <property type="entry name" value="RNase_Y_N"/>
    <property type="match status" value="1"/>
</dbReference>
<dbReference type="SMART" id="SM00471">
    <property type="entry name" value="HDc"/>
    <property type="match status" value="1"/>
</dbReference>
<dbReference type="SMART" id="SM00322">
    <property type="entry name" value="KH"/>
    <property type="match status" value="1"/>
</dbReference>
<dbReference type="SUPFAM" id="SSF54791">
    <property type="entry name" value="Eukaryotic type KH-domain (KH-domain type I)"/>
    <property type="match status" value="1"/>
</dbReference>
<dbReference type="SUPFAM" id="SSF109604">
    <property type="entry name" value="HD-domain/PDEase-like"/>
    <property type="match status" value="1"/>
</dbReference>
<dbReference type="PROSITE" id="PS51831">
    <property type="entry name" value="HD"/>
    <property type="match status" value="1"/>
</dbReference>
<dbReference type="PROSITE" id="PS50084">
    <property type="entry name" value="KH_TYPE_1"/>
    <property type="match status" value="1"/>
</dbReference>
<organism>
    <name type="scientific">Rubrobacter xylanophilus (strain DSM 9941 / JCM 11954 / NBRC 16129 / PRD-1)</name>
    <dbReference type="NCBI Taxonomy" id="266117"/>
    <lineage>
        <taxon>Bacteria</taxon>
        <taxon>Bacillati</taxon>
        <taxon>Actinomycetota</taxon>
        <taxon>Rubrobacteria</taxon>
        <taxon>Rubrobacterales</taxon>
        <taxon>Rubrobacteraceae</taxon>
        <taxon>Rubrobacter</taxon>
    </lineage>
</organism>